<proteinExistence type="inferred from homology"/>
<reference key="1">
    <citation type="journal article" date="2007" name="PLoS Genet.">
        <title>The complete genome sequence of Yersinia pseudotuberculosis IP31758, the causative agent of Far East scarlet-like fever.</title>
        <authorList>
            <person name="Eppinger M."/>
            <person name="Rosovitz M.J."/>
            <person name="Fricke W.F."/>
            <person name="Rasko D.A."/>
            <person name="Kokorina G."/>
            <person name="Fayolle C."/>
            <person name="Lindler L.E."/>
            <person name="Carniel E."/>
            <person name="Ravel J."/>
        </authorList>
    </citation>
    <scope>NUCLEOTIDE SEQUENCE [LARGE SCALE GENOMIC DNA]</scope>
    <source>
        <strain>IP 31758</strain>
    </source>
</reference>
<gene>
    <name evidence="1" type="primary">groES</name>
    <name evidence="1" type="synonym">groS</name>
    <name type="ordered locus">YpsIP31758_3676</name>
</gene>
<keyword id="KW-0143">Chaperone</keyword>
<keyword id="KW-0963">Cytoplasm</keyword>
<evidence type="ECO:0000255" key="1">
    <source>
        <dbReference type="HAMAP-Rule" id="MF_00580"/>
    </source>
</evidence>
<dbReference type="EMBL" id="CP000720">
    <property type="protein sequence ID" value="ABS47655.1"/>
    <property type="molecule type" value="Genomic_DNA"/>
</dbReference>
<dbReference type="RefSeq" id="WP_002209127.1">
    <property type="nucleotide sequence ID" value="NC_009708.1"/>
</dbReference>
<dbReference type="SMR" id="A7FN02"/>
<dbReference type="KEGG" id="ypi:YpsIP31758_3676"/>
<dbReference type="HOGENOM" id="CLU_132825_1_1_6"/>
<dbReference type="Proteomes" id="UP000002412">
    <property type="component" value="Chromosome"/>
</dbReference>
<dbReference type="GO" id="GO:0005737">
    <property type="term" value="C:cytoplasm"/>
    <property type="evidence" value="ECO:0007669"/>
    <property type="project" value="UniProtKB-SubCell"/>
</dbReference>
<dbReference type="GO" id="GO:0005524">
    <property type="term" value="F:ATP binding"/>
    <property type="evidence" value="ECO:0007669"/>
    <property type="project" value="InterPro"/>
</dbReference>
<dbReference type="GO" id="GO:0046872">
    <property type="term" value="F:metal ion binding"/>
    <property type="evidence" value="ECO:0007669"/>
    <property type="project" value="TreeGrafter"/>
</dbReference>
<dbReference type="GO" id="GO:0044183">
    <property type="term" value="F:protein folding chaperone"/>
    <property type="evidence" value="ECO:0007669"/>
    <property type="project" value="InterPro"/>
</dbReference>
<dbReference type="GO" id="GO:0051087">
    <property type="term" value="F:protein-folding chaperone binding"/>
    <property type="evidence" value="ECO:0007669"/>
    <property type="project" value="TreeGrafter"/>
</dbReference>
<dbReference type="GO" id="GO:0051082">
    <property type="term" value="F:unfolded protein binding"/>
    <property type="evidence" value="ECO:0007669"/>
    <property type="project" value="TreeGrafter"/>
</dbReference>
<dbReference type="GO" id="GO:0051085">
    <property type="term" value="P:chaperone cofactor-dependent protein refolding"/>
    <property type="evidence" value="ECO:0007669"/>
    <property type="project" value="TreeGrafter"/>
</dbReference>
<dbReference type="CDD" id="cd00320">
    <property type="entry name" value="cpn10"/>
    <property type="match status" value="1"/>
</dbReference>
<dbReference type="FunFam" id="2.30.33.40:FF:000001">
    <property type="entry name" value="10 kDa chaperonin"/>
    <property type="match status" value="1"/>
</dbReference>
<dbReference type="Gene3D" id="2.30.33.40">
    <property type="entry name" value="GroES chaperonin"/>
    <property type="match status" value="1"/>
</dbReference>
<dbReference type="HAMAP" id="MF_00580">
    <property type="entry name" value="CH10"/>
    <property type="match status" value="1"/>
</dbReference>
<dbReference type="InterPro" id="IPR020818">
    <property type="entry name" value="Chaperonin_GroES"/>
</dbReference>
<dbReference type="InterPro" id="IPR037124">
    <property type="entry name" value="Chaperonin_GroES_sf"/>
</dbReference>
<dbReference type="InterPro" id="IPR018369">
    <property type="entry name" value="Chaprnonin_Cpn10_CS"/>
</dbReference>
<dbReference type="InterPro" id="IPR011032">
    <property type="entry name" value="GroES-like_sf"/>
</dbReference>
<dbReference type="NCBIfam" id="NF001526">
    <property type="entry name" value="PRK00364.1-1"/>
    <property type="match status" value="1"/>
</dbReference>
<dbReference type="NCBIfam" id="NF001527">
    <property type="entry name" value="PRK00364.1-2"/>
    <property type="match status" value="1"/>
</dbReference>
<dbReference type="NCBIfam" id="NF001531">
    <property type="entry name" value="PRK00364.2-2"/>
    <property type="match status" value="1"/>
</dbReference>
<dbReference type="PANTHER" id="PTHR10772">
    <property type="entry name" value="10 KDA HEAT SHOCK PROTEIN"/>
    <property type="match status" value="1"/>
</dbReference>
<dbReference type="PANTHER" id="PTHR10772:SF58">
    <property type="entry name" value="CO-CHAPERONIN GROES"/>
    <property type="match status" value="1"/>
</dbReference>
<dbReference type="Pfam" id="PF00166">
    <property type="entry name" value="Cpn10"/>
    <property type="match status" value="1"/>
</dbReference>
<dbReference type="PRINTS" id="PR00297">
    <property type="entry name" value="CHAPERONIN10"/>
</dbReference>
<dbReference type="SMART" id="SM00883">
    <property type="entry name" value="Cpn10"/>
    <property type="match status" value="1"/>
</dbReference>
<dbReference type="SUPFAM" id="SSF50129">
    <property type="entry name" value="GroES-like"/>
    <property type="match status" value="1"/>
</dbReference>
<dbReference type="PROSITE" id="PS00681">
    <property type="entry name" value="CHAPERONINS_CPN10"/>
    <property type="match status" value="1"/>
</dbReference>
<accession>A7FN02</accession>
<organism>
    <name type="scientific">Yersinia pseudotuberculosis serotype O:1b (strain IP 31758)</name>
    <dbReference type="NCBI Taxonomy" id="349747"/>
    <lineage>
        <taxon>Bacteria</taxon>
        <taxon>Pseudomonadati</taxon>
        <taxon>Pseudomonadota</taxon>
        <taxon>Gammaproteobacteria</taxon>
        <taxon>Enterobacterales</taxon>
        <taxon>Yersiniaceae</taxon>
        <taxon>Yersinia</taxon>
    </lineage>
</organism>
<protein>
    <recommendedName>
        <fullName evidence="1">Co-chaperonin GroES</fullName>
    </recommendedName>
    <alternativeName>
        <fullName evidence="1">10 kDa chaperonin</fullName>
    </alternativeName>
    <alternativeName>
        <fullName evidence="1">Chaperonin-10</fullName>
        <shortName evidence="1">Cpn10</shortName>
    </alternativeName>
</protein>
<sequence length="97" mass="10357">MKIRPLHDRVIVKRKEVESKSAGGIVLTGTAAGKSTRGEVLAVGNGRILDNGEIKPLDVKVGDVVIFNDGYGVKAEKIDNEEVLIMSESDILAIVEA</sequence>
<feature type="chain" id="PRO_1000061194" description="Co-chaperonin GroES">
    <location>
        <begin position="1"/>
        <end position="97"/>
    </location>
</feature>
<name>CH10_YERP3</name>
<comment type="function">
    <text evidence="1">Together with the chaperonin GroEL, plays an essential role in assisting protein folding. The GroEL-GroES system forms a nano-cage that allows encapsulation of the non-native substrate proteins and provides a physical environment optimized to promote and accelerate protein folding. GroES binds to the apical surface of the GroEL ring, thereby capping the opening of the GroEL channel.</text>
</comment>
<comment type="subunit">
    <text evidence="1">Heptamer of 7 subunits arranged in a ring. Interacts with the chaperonin GroEL.</text>
</comment>
<comment type="subcellular location">
    <subcellularLocation>
        <location evidence="1">Cytoplasm</location>
    </subcellularLocation>
</comment>
<comment type="similarity">
    <text evidence="1">Belongs to the GroES chaperonin family.</text>
</comment>